<gene>
    <name evidence="1" type="primary">rpmE2</name>
    <name type="ordered locus">XC_0945</name>
</gene>
<sequence length="80" mass="9278">MKDNVHPSYNDVVFHDVTSDFKILTRSTMSSKETVKWEDGQDYPLIKVEISSASHPFYTGKHKVIDTGGRIDKFQKRYAR</sequence>
<name>RL31B_XANC8</name>
<feature type="chain" id="PRO_0000259132" description="Large ribosomal subunit protein bL31B">
    <location>
        <begin position="1"/>
        <end position="80"/>
    </location>
</feature>
<dbReference type="EMBL" id="CP000050">
    <property type="protein sequence ID" value="AAY48019.1"/>
    <property type="molecule type" value="Genomic_DNA"/>
</dbReference>
<dbReference type="RefSeq" id="WP_011038339.1">
    <property type="nucleotide sequence ID" value="NZ_CP155948.1"/>
</dbReference>
<dbReference type="SMR" id="Q4UY54"/>
<dbReference type="KEGG" id="xcb:XC_0945"/>
<dbReference type="HOGENOM" id="CLU_114306_2_2_6"/>
<dbReference type="Proteomes" id="UP000000420">
    <property type="component" value="Chromosome"/>
</dbReference>
<dbReference type="GO" id="GO:1990904">
    <property type="term" value="C:ribonucleoprotein complex"/>
    <property type="evidence" value="ECO:0007669"/>
    <property type="project" value="UniProtKB-KW"/>
</dbReference>
<dbReference type="GO" id="GO:0005840">
    <property type="term" value="C:ribosome"/>
    <property type="evidence" value="ECO:0007669"/>
    <property type="project" value="UniProtKB-KW"/>
</dbReference>
<dbReference type="GO" id="GO:0003735">
    <property type="term" value="F:structural constituent of ribosome"/>
    <property type="evidence" value="ECO:0007669"/>
    <property type="project" value="InterPro"/>
</dbReference>
<dbReference type="GO" id="GO:0006412">
    <property type="term" value="P:translation"/>
    <property type="evidence" value="ECO:0007669"/>
    <property type="project" value="UniProtKB-UniRule"/>
</dbReference>
<dbReference type="Gene3D" id="4.10.830.30">
    <property type="entry name" value="Ribosomal protein L31"/>
    <property type="match status" value="1"/>
</dbReference>
<dbReference type="HAMAP" id="MF_00502">
    <property type="entry name" value="Ribosomal_bL31_2"/>
    <property type="match status" value="1"/>
</dbReference>
<dbReference type="InterPro" id="IPR034704">
    <property type="entry name" value="Ribosomal_bL28/bL31-like_sf"/>
</dbReference>
<dbReference type="InterPro" id="IPR002150">
    <property type="entry name" value="Ribosomal_bL31"/>
</dbReference>
<dbReference type="InterPro" id="IPR027493">
    <property type="entry name" value="Ribosomal_bL31_B"/>
</dbReference>
<dbReference type="InterPro" id="IPR042105">
    <property type="entry name" value="Ribosomal_bL31_sf"/>
</dbReference>
<dbReference type="NCBIfam" id="TIGR00105">
    <property type="entry name" value="L31"/>
    <property type="match status" value="1"/>
</dbReference>
<dbReference type="NCBIfam" id="NF002462">
    <property type="entry name" value="PRK01678.1"/>
    <property type="match status" value="1"/>
</dbReference>
<dbReference type="PANTHER" id="PTHR33280">
    <property type="entry name" value="50S RIBOSOMAL PROTEIN L31, CHLOROPLASTIC"/>
    <property type="match status" value="1"/>
</dbReference>
<dbReference type="PANTHER" id="PTHR33280:SF6">
    <property type="entry name" value="LARGE RIBOSOMAL SUBUNIT PROTEIN BL31A"/>
    <property type="match status" value="1"/>
</dbReference>
<dbReference type="Pfam" id="PF01197">
    <property type="entry name" value="Ribosomal_L31"/>
    <property type="match status" value="1"/>
</dbReference>
<dbReference type="PRINTS" id="PR01249">
    <property type="entry name" value="RIBOSOMALL31"/>
</dbReference>
<dbReference type="SUPFAM" id="SSF143800">
    <property type="entry name" value="L28p-like"/>
    <property type="match status" value="1"/>
</dbReference>
<dbReference type="PROSITE" id="PS01143">
    <property type="entry name" value="RIBOSOMAL_L31"/>
    <property type="match status" value="1"/>
</dbReference>
<accession>Q4UY54</accession>
<keyword id="KW-0687">Ribonucleoprotein</keyword>
<keyword id="KW-0689">Ribosomal protein</keyword>
<evidence type="ECO:0000255" key="1">
    <source>
        <dbReference type="HAMAP-Rule" id="MF_00502"/>
    </source>
</evidence>
<evidence type="ECO:0000305" key="2"/>
<organism>
    <name type="scientific">Xanthomonas campestris pv. campestris (strain 8004)</name>
    <dbReference type="NCBI Taxonomy" id="314565"/>
    <lineage>
        <taxon>Bacteria</taxon>
        <taxon>Pseudomonadati</taxon>
        <taxon>Pseudomonadota</taxon>
        <taxon>Gammaproteobacteria</taxon>
        <taxon>Lysobacterales</taxon>
        <taxon>Lysobacteraceae</taxon>
        <taxon>Xanthomonas</taxon>
    </lineage>
</organism>
<proteinExistence type="inferred from homology"/>
<protein>
    <recommendedName>
        <fullName evidence="1">Large ribosomal subunit protein bL31B</fullName>
    </recommendedName>
    <alternativeName>
        <fullName evidence="2">50S ribosomal protein L31 type B</fullName>
    </alternativeName>
</protein>
<comment type="subunit">
    <text evidence="1">Part of the 50S ribosomal subunit.</text>
</comment>
<comment type="similarity">
    <text evidence="1">Belongs to the bacterial ribosomal protein bL31 family. Type B subfamily.</text>
</comment>
<reference key="1">
    <citation type="journal article" date="2005" name="Genome Res.">
        <title>Comparative and functional genomic analyses of the pathogenicity of phytopathogen Xanthomonas campestris pv. campestris.</title>
        <authorList>
            <person name="Qian W."/>
            <person name="Jia Y."/>
            <person name="Ren S.-X."/>
            <person name="He Y.-Q."/>
            <person name="Feng J.-X."/>
            <person name="Lu L.-F."/>
            <person name="Sun Q."/>
            <person name="Ying G."/>
            <person name="Tang D.-J."/>
            <person name="Tang H."/>
            <person name="Wu W."/>
            <person name="Hao P."/>
            <person name="Wang L."/>
            <person name="Jiang B.-L."/>
            <person name="Zeng S."/>
            <person name="Gu W.-Y."/>
            <person name="Lu G."/>
            <person name="Rong L."/>
            <person name="Tian Y."/>
            <person name="Yao Z."/>
            <person name="Fu G."/>
            <person name="Chen B."/>
            <person name="Fang R."/>
            <person name="Qiang B."/>
            <person name="Chen Z."/>
            <person name="Zhao G.-P."/>
            <person name="Tang J.-L."/>
            <person name="He C."/>
        </authorList>
    </citation>
    <scope>NUCLEOTIDE SEQUENCE [LARGE SCALE GENOMIC DNA]</scope>
    <source>
        <strain>8004</strain>
    </source>
</reference>